<organism>
    <name type="scientific">Dechloromonas aromatica (strain RCB)</name>
    <dbReference type="NCBI Taxonomy" id="159087"/>
    <lineage>
        <taxon>Bacteria</taxon>
        <taxon>Pseudomonadati</taxon>
        <taxon>Pseudomonadota</taxon>
        <taxon>Betaproteobacteria</taxon>
        <taxon>Rhodocyclales</taxon>
        <taxon>Azonexaceae</taxon>
        <taxon>Dechloromonas</taxon>
    </lineage>
</organism>
<sequence>MSKAPMRVAITGAAGQIGYSLLFRIASGEMLGKDQPVILQLLDLPQAQQAVKGVMMELEDCAFPLLAGMVATDDPNVAFKDADVCLLVGARPRTKGMERADLLTANGAIFTVQGKAIAENAKEDVKVLVVGNPCNTNAFIAAAAAKKVGRTNPNNYHGMLRLDHNRALSQLAGKTGRAVSSLKKLVVWGNHSPTMYADYRFCTSNGDSVKALVNDHAWNNDVFLPTVGKRGAAIIEARGLSSAASAANAAIDHVRDWVLGSDEWVTMGVPSDGSYGIPAGIVFGFPCECKGGKFSIIQGLEIDEYSREKINFTLKELTDEAEAVKDML</sequence>
<comment type="function">
    <text evidence="1">Catalyzes the reversible oxidation of malate to oxaloacetate.</text>
</comment>
<comment type="catalytic activity">
    <reaction evidence="1">
        <text>(S)-malate + NAD(+) = oxaloacetate + NADH + H(+)</text>
        <dbReference type="Rhea" id="RHEA:21432"/>
        <dbReference type="ChEBI" id="CHEBI:15378"/>
        <dbReference type="ChEBI" id="CHEBI:15589"/>
        <dbReference type="ChEBI" id="CHEBI:16452"/>
        <dbReference type="ChEBI" id="CHEBI:57540"/>
        <dbReference type="ChEBI" id="CHEBI:57945"/>
        <dbReference type="EC" id="1.1.1.37"/>
    </reaction>
</comment>
<comment type="similarity">
    <text evidence="1">Belongs to the LDH/MDH superfamily. MDH type 2 family.</text>
</comment>
<name>MDH_DECAR</name>
<protein>
    <recommendedName>
        <fullName evidence="1">Malate dehydrogenase</fullName>
        <ecNumber evidence="1">1.1.1.37</ecNumber>
    </recommendedName>
</protein>
<keyword id="KW-0520">NAD</keyword>
<keyword id="KW-0560">Oxidoreductase</keyword>
<keyword id="KW-0816">Tricarboxylic acid cycle</keyword>
<proteinExistence type="inferred from homology"/>
<accession>Q47C34</accession>
<evidence type="ECO:0000255" key="1">
    <source>
        <dbReference type="HAMAP-Rule" id="MF_01517"/>
    </source>
</evidence>
<dbReference type="EC" id="1.1.1.37" evidence="1"/>
<dbReference type="EMBL" id="CP000089">
    <property type="protein sequence ID" value="AAZ47597.1"/>
    <property type="molecule type" value="Genomic_DNA"/>
</dbReference>
<dbReference type="SMR" id="Q47C34"/>
<dbReference type="STRING" id="159087.Daro_2867"/>
<dbReference type="KEGG" id="dar:Daro_2867"/>
<dbReference type="eggNOG" id="COG0039">
    <property type="taxonomic scope" value="Bacteria"/>
</dbReference>
<dbReference type="HOGENOM" id="CLU_040727_2_0_4"/>
<dbReference type="OrthoDB" id="9802969at2"/>
<dbReference type="GO" id="GO:0030060">
    <property type="term" value="F:L-malate dehydrogenase (NAD+) activity"/>
    <property type="evidence" value="ECO:0007669"/>
    <property type="project" value="UniProtKB-UniRule"/>
</dbReference>
<dbReference type="GO" id="GO:0006108">
    <property type="term" value="P:malate metabolic process"/>
    <property type="evidence" value="ECO:0007669"/>
    <property type="project" value="InterPro"/>
</dbReference>
<dbReference type="GO" id="GO:0006099">
    <property type="term" value="P:tricarboxylic acid cycle"/>
    <property type="evidence" value="ECO:0007669"/>
    <property type="project" value="UniProtKB-UniRule"/>
</dbReference>
<dbReference type="CDD" id="cd01338">
    <property type="entry name" value="MDH_chloroplast-like"/>
    <property type="match status" value="1"/>
</dbReference>
<dbReference type="FunFam" id="3.40.50.720:FF:000010">
    <property type="entry name" value="Malate dehydrogenase"/>
    <property type="match status" value="1"/>
</dbReference>
<dbReference type="FunFam" id="3.90.110.10:FF:000002">
    <property type="entry name" value="Malate dehydrogenase"/>
    <property type="match status" value="1"/>
</dbReference>
<dbReference type="Gene3D" id="3.90.110.10">
    <property type="entry name" value="Lactate dehydrogenase/glycoside hydrolase, family 4, C-terminal"/>
    <property type="match status" value="1"/>
</dbReference>
<dbReference type="Gene3D" id="3.40.50.720">
    <property type="entry name" value="NAD(P)-binding Rossmann-like Domain"/>
    <property type="match status" value="1"/>
</dbReference>
<dbReference type="HAMAP" id="MF_01517">
    <property type="entry name" value="Malate_dehydrog_2"/>
    <property type="match status" value="1"/>
</dbReference>
<dbReference type="InterPro" id="IPR001557">
    <property type="entry name" value="L-lactate/malate_DH"/>
</dbReference>
<dbReference type="InterPro" id="IPR022383">
    <property type="entry name" value="Lactate/malate_DH_C"/>
</dbReference>
<dbReference type="InterPro" id="IPR001236">
    <property type="entry name" value="Lactate/malate_DH_N"/>
</dbReference>
<dbReference type="InterPro" id="IPR015955">
    <property type="entry name" value="Lactate_DH/Glyco_Ohase_4_C"/>
</dbReference>
<dbReference type="InterPro" id="IPR010945">
    <property type="entry name" value="Malate_DH_type2"/>
</dbReference>
<dbReference type="InterPro" id="IPR036291">
    <property type="entry name" value="NAD(P)-bd_dom_sf"/>
</dbReference>
<dbReference type="NCBIfam" id="TIGR01759">
    <property type="entry name" value="MalateDH-SF1"/>
    <property type="match status" value="1"/>
</dbReference>
<dbReference type="NCBIfam" id="NF003916">
    <property type="entry name" value="PRK05442.1"/>
    <property type="match status" value="1"/>
</dbReference>
<dbReference type="PANTHER" id="PTHR23382">
    <property type="entry name" value="MALATE DEHYDROGENASE"/>
    <property type="match status" value="1"/>
</dbReference>
<dbReference type="Pfam" id="PF02866">
    <property type="entry name" value="Ldh_1_C"/>
    <property type="match status" value="1"/>
</dbReference>
<dbReference type="Pfam" id="PF00056">
    <property type="entry name" value="Ldh_1_N"/>
    <property type="match status" value="1"/>
</dbReference>
<dbReference type="PIRSF" id="PIRSF000102">
    <property type="entry name" value="Lac_mal_DH"/>
    <property type="match status" value="1"/>
</dbReference>
<dbReference type="SUPFAM" id="SSF56327">
    <property type="entry name" value="LDH C-terminal domain-like"/>
    <property type="match status" value="1"/>
</dbReference>
<dbReference type="SUPFAM" id="SSF51735">
    <property type="entry name" value="NAD(P)-binding Rossmann-fold domains"/>
    <property type="match status" value="1"/>
</dbReference>
<feature type="chain" id="PRO_0000113367" description="Malate dehydrogenase">
    <location>
        <begin position="1"/>
        <end position="328"/>
    </location>
</feature>
<feature type="active site" description="Proton acceptor" evidence="1">
    <location>
        <position position="191"/>
    </location>
</feature>
<feature type="binding site" evidence="1">
    <location>
        <begin position="12"/>
        <end position="18"/>
    </location>
    <ligand>
        <name>NAD(+)</name>
        <dbReference type="ChEBI" id="CHEBI:57540"/>
    </ligand>
</feature>
<feature type="binding site" evidence="1">
    <location>
        <position position="93"/>
    </location>
    <ligand>
        <name>substrate</name>
    </ligand>
</feature>
<feature type="binding site" evidence="1">
    <location>
        <position position="99"/>
    </location>
    <ligand>
        <name>substrate</name>
    </ligand>
</feature>
<feature type="binding site" evidence="1">
    <location>
        <position position="106"/>
    </location>
    <ligand>
        <name>NAD(+)</name>
        <dbReference type="ChEBI" id="CHEBI:57540"/>
    </ligand>
</feature>
<feature type="binding site" evidence="1">
    <location>
        <position position="113"/>
    </location>
    <ligand>
        <name>NAD(+)</name>
        <dbReference type="ChEBI" id="CHEBI:57540"/>
    </ligand>
</feature>
<feature type="binding site" evidence="1">
    <location>
        <begin position="130"/>
        <end position="132"/>
    </location>
    <ligand>
        <name>NAD(+)</name>
        <dbReference type="ChEBI" id="CHEBI:57540"/>
    </ligand>
</feature>
<feature type="binding site" evidence="1">
    <location>
        <position position="132"/>
    </location>
    <ligand>
        <name>substrate</name>
    </ligand>
</feature>
<feature type="binding site" evidence="1">
    <location>
        <position position="166"/>
    </location>
    <ligand>
        <name>substrate</name>
    </ligand>
</feature>
<reference key="1">
    <citation type="journal article" date="2009" name="BMC Genomics">
        <title>Metabolic analysis of the soil microbe Dechloromonas aromatica str. RCB: indications of a surprisingly complex life-style and cryptic anaerobic pathways for aromatic degradation.</title>
        <authorList>
            <person name="Salinero K.K."/>
            <person name="Keller K."/>
            <person name="Feil W.S."/>
            <person name="Feil H."/>
            <person name="Trong S."/>
            <person name="Di Bartolo G."/>
            <person name="Lapidus A."/>
        </authorList>
    </citation>
    <scope>NUCLEOTIDE SEQUENCE [LARGE SCALE GENOMIC DNA]</scope>
    <source>
        <strain>RCB</strain>
    </source>
</reference>
<gene>
    <name evidence="1" type="primary">mdh</name>
    <name type="ordered locus">Daro_2867</name>
</gene>